<reference key="1">
    <citation type="journal article" date="2004" name="Plant Cell">
        <title>An Arabidopsis homolog of the bacterial cell division inhibitor SulA is involved in plastid division.</title>
        <authorList>
            <person name="Raynaud C."/>
            <person name="Cassier-Chauvat C."/>
            <person name="Perennes C."/>
            <person name="Bergounioux C."/>
        </authorList>
    </citation>
    <scope>NUCLEOTIDE SEQUENCE [MRNA]</scope>
    <scope>SUBCELLULAR LOCATION</scope>
    <scope>TISSUE SPECIFICITY</scope>
    <source>
        <strain evidence="7">cv. Wassilewskija</strain>
    </source>
</reference>
<reference key="2">
    <citation type="journal article" date="1999" name="Nature">
        <title>Sequence and analysis of chromosome 2 of the plant Arabidopsis thaliana.</title>
        <authorList>
            <person name="Lin X."/>
            <person name="Kaul S."/>
            <person name="Rounsley S.D."/>
            <person name="Shea T.P."/>
            <person name="Benito M.-I."/>
            <person name="Town C.D."/>
            <person name="Fujii C.Y."/>
            <person name="Mason T.M."/>
            <person name="Bowman C.L."/>
            <person name="Barnstead M.E."/>
            <person name="Feldblyum T.V."/>
            <person name="Buell C.R."/>
            <person name="Ketchum K.A."/>
            <person name="Lee J.J."/>
            <person name="Ronning C.M."/>
            <person name="Koo H.L."/>
            <person name="Moffat K.S."/>
            <person name="Cronin L.A."/>
            <person name="Shen M."/>
            <person name="Pai G."/>
            <person name="Van Aken S."/>
            <person name="Umayam L."/>
            <person name="Tallon L.J."/>
            <person name="Gill J.E."/>
            <person name="Adams M.D."/>
            <person name="Carrera A.J."/>
            <person name="Creasy T.H."/>
            <person name="Goodman H.M."/>
            <person name="Somerville C.R."/>
            <person name="Copenhaver G.P."/>
            <person name="Preuss D."/>
            <person name="Nierman W.C."/>
            <person name="White O."/>
            <person name="Eisen J.A."/>
            <person name="Salzberg S.L."/>
            <person name="Fraser C.M."/>
            <person name="Venter J.C."/>
        </authorList>
    </citation>
    <scope>NUCLEOTIDE SEQUENCE [LARGE SCALE GENOMIC DNA]</scope>
    <source>
        <strain>cv. Columbia</strain>
    </source>
</reference>
<reference key="3">
    <citation type="journal article" date="2017" name="Plant J.">
        <title>Araport11: a complete reannotation of the Arabidopsis thaliana reference genome.</title>
        <authorList>
            <person name="Cheng C.Y."/>
            <person name="Krishnakumar V."/>
            <person name="Chan A.P."/>
            <person name="Thibaud-Nissen F."/>
            <person name="Schobel S."/>
            <person name="Town C.D."/>
        </authorList>
    </citation>
    <scope>GENOME REANNOTATION</scope>
    <source>
        <strain>cv. Columbia</strain>
    </source>
</reference>
<reference key="4">
    <citation type="journal article" date="2003" name="Science">
        <title>Empirical analysis of transcriptional activity in the Arabidopsis genome.</title>
        <authorList>
            <person name="Yamada K."/>
            <person name="Lim J."/>
            <person name="Dale J.M."/>
            <person name="Chen H."/>
            <person name="Shinn P."/>
            <person name="Palm C.J."/>
            <person name="Southwick A.M."/>
            <person name="Wu H.C."/>
            <person name="Kim C.J."/>
            <person name="Nguyen M."/>
            <person name="Pham P.K."/>
            <person name="Cheuk R.F."/>
            <person name="Karlin-Newmann G."/>
            <person name="Liu S.X."/>
            <person name="Lam B."/>
            <person name="Sakano H."/>
            <person name="Wu T."/>
            <person name="Yu G."/>
            <person name="Miranda M."/>
            <person name="Quach H.L."/>
            <person name="Tripp M."/>
            <person name="Chang C.H."/>
            <person name="Lee J.M."/>
            <person name="Toriumi M.J."/>
            <person name="Chan M.M."/>
            <person name="Tang C.C."/>
            <person name="Onodera C.S."/>
            <person name="Deng J.M."/>
            <person name="Akiyama K."/>
            <person name="Ansari Y."/>
            <person name="Arakawa T."/>
            <person name="Banh J."/>
            <person name="Banno F."/>
            <person name="Bowser L."/>
            <person name="Brooks S.Y."/>
            <person name="Carninci P."/>
            <person name="Chao Q."/>
            <person name="Choy N."/>
            <person name="Enju A."/>
            <person name="Goldsmith A.D."/>
            <person name="Gurjal M."/>
            <person name="Hansen N.F."/>
            <person name="Hayashizaki Y."/>
            <person name="Johnson-Hopson C."/>
            <person name="Hsuan V.W."/>
            <person name="Iida K."/>
            <person name="Karnes M."/>
            <person name="Khan S."/>
            <person name="Koesema E."/>
            <person name="Ishida J."/>
            <person name="Jiang P.X."/>
            <person name="Jones T."/>
            <person name="Kawai J."/>
            <person name="Kamiya A."/>
            <person name="Meyers C."/>
            <person name="Nakajima M."/>
            <person name="Narusaka M."/>
            <person name="Seki M."/>
            <person name="Sakurai T."/>
            <person name="Satou M."/>
            <person name="Tamse R."/>
            <person name="Vaysberg M."/>
            <person name="Wallender E.K."/>
            <person name="Wong C."/>
            <person name="Yamamura Y."/>
            <person name="Yuan S."/>
            <person name="Shinozaki K."/>
            <person name="Davis R.W."/>
            <person name="Theologis A."/>
            <person name="Ecker J.R."/>
        </authorList>
    </citation>
    <scope>NUCLEOTIDE SEQUENCE [LARGE SCALE MRNA]</scope>
    <source>
        <strain>cv. Columbia</strain>
    </source>
</reference>
<reference key="5">
    <citation type="journal article" date="2004" name="Curr. Biol.">
        <title>GIANT CHLOROPLAST 1 is essential for correct plastid division in Arabidopsis.</title>
        <authorList>
            <person name="Maple J."/>
            <person name="Fujiwara M.T."/>
            <person name="Kitahata N."/>
            <person name="Lawson T."/>
            <person name="Baker N.R."/>
            <person name="Yoshida S."/>
            <person name="Moller S.G."/>
        </authorList>
    </citation>
    <scope>FUNCTION</scope>
    <scope>HOMODIMERIZATION</scope>
    <scope>SUBCELLULAR LOCATION</scope>
    <scope>TISSUE SPECIFICITY</scope>
</reference>
<protein>
    <recommendedName>
        <fullName evidence="7">Epimerase family protein SDR39U1 homolog, chloroplastic</fullName>
        <ecNumber>1.1.1.-</ecNumber>
    </recommendedName>
    <alternativeName>
        <fullName evidence="5">Protein GIANT CHLOROPLAST 1</fullName>
    </alternativeName>
    <alternativeName>
        <fullName evidence="6">Protein SulA homolog</fullName>
        <shortName evidence="6">AtSulA</shortName>
    </alternativeName>
</protein>
<comment type="function">
    <text evidence="3">Putative NADP-dependent oxidoreductase that acts as a positive regulator of chloroplast division. May play a role at an early stage of the division process.</text>
</comment>
<comment type="subunit">
    <text evidence="3">Can form homodimers.</text>
</comment>
<comment type="subcellular location">
    <subcellularLocation>
        <location>Plastid</location>
        <location>Chloroplast inner membrane</location>
        <topology>Peripheral membrane protein</topology>
        <orientation evidence="3">Stromal side</orientation>
    </subcellularLocation>
    <subcellularLocation>
        <location evidence="4">Plastid</location>
        <location evidence="4">Chloroplast</location>
    </subcellularLocation>
</comment>
<comment type="tissue specificity">
    <text evidence="3 4">Expressed in leaves, stems and flower buds.</text>
</comment>
<comment type="miscellaneous">
    <text evidence="3">Plants silencing GC1 show greatly enlarged chloroplasts containing densely packed thylakoid membranes in mesophyll cells and leaves with decreased rates of CO(2) assimilation.</text>
</comment>
<sequence length="347" mass="37746">MELLCSPTSLSSSFALSSALLVPRSFSMPGTRRFMVLCSSQKESQMTVSVTGATGFIGRRLVQRLRADNHAIRVLTRSKSKAEQIFPAKDFPGIVIAEESEWKNCVQGSTAVVNLAGLPISTRWSPEIKKEIKGSRIRVTSKVVDLINNSPAEARPTVLVSATAVGYYGTSETGVFDENSPSGKDYLAEVCREWEGTALKANKDVRVALIRIGVVLGKDGGALAMMIPFFQMFAGGPLGSGQQWFSWIHVDDLVNLIYEALTNPSYKGVINGTAPNPVRLGEMCQQLGSVLSRPSWLPVPDFALKALLGEGATVVLEGQKVLPVRAKELGFEFKYKYVKDALRAIMQ</sequence>
<proteinExistence type="evidence at transcript level"/>
<keyword id="KW-0150">Chloroplast</keyword>
<keyword id="KW-0472">Membrane</keyword>
<keyword id="KW-0521">NADP</keyword>
<keyword id="KW-0560">Oxidoreductase</keyword>
<keyword id="KW-0934">Plastid</keyword>
<keyword id="KW-1001">Plastid inner membrane</keyword>
<keyword id="KW-1185">Reference proteome</keyword>
<keyword id="KW-0809">Transit peptide</keyword>
<gene>
    <name evidence="5" type="primary">GC1</name>
    <name evidence="6" type="synonym">SULA</name>
    <name evidence="8" type="ordered locus">At2g21280</name>
    <name type="ORF">F3K23</name>
</gene>
<feature type="transit peptide" description="Chloroplast" evidence="2">
    <location>
        <begin position="1"/>
        <end position="37"/>
    </location>
</feature>
<feature type="chain" id="PRO_5001126579" description="Epimerase family protein SDR39U1 homolog, chloroplastic">
    <location>
        <begin position="38"/>
        <end position="347"/>
    </location>
</feature>
<feature type="binding site" evidence="1">
    <location>
        <begin position="54"/>
        <end position="57"/>
    </location>
    <ligand>
        <name>NADP(+)</name>
        <dbReference type="ChEBI" id="CHEBI:58349"/>
    </ligand>
</feature>
<feature type="binding site" evidence="1">
    <location>
        <begin position="76"/>
        <end position="77"/>
    </location>
    <ligand>
        <name>NADP(+)</name>
        <dbReference type="ChEBI" id="CHEBI:58349"/>
    </ligand>
</feature>
<feature type="binding site" evidence="1">
    <location>
        <begin position="115"/>
        <end position="119"/>
    </location>
    <ligand>
        <name>NADP(+)</name>
        <dbReference type="ChEBI" id="CHEBI:58349"/>
    </ligand>
</feature>
<feature type="binding site" evidence="1">
    <location>
        <position position="136"/>
    </location>
    <ligand>
        <name>NADP(+)</name>
        <dbReference type="ChEBI" id="CHEBI:58349"/>
    </ligand>
</feature>
<accession>Q9SJU9</accession>
<accession>Q9FEG0</accession>
<dbReference type="EC" id="1.1.1.-"/>
<dbReference type="EMBL" id="AJ516948">
    <property type="protein sequence ID" value="CAD56855.1"/>
    <property type="molecule type" value="mRNA"/>
</dbReference>
<dbReference type="EMBL" id="AC006841">
    <property type="protein sequence ID" value="AAD23676.2"/>
    <property type="molecule type" value="Genomic_DNA"/>
</dbReference>
<dbReference type="EMBL" id="CP002685">
    <property type="protein sequence ID" value="AEC07155.1"/>
    <property type="molecule type" value="Genomic_DNA"/>
</dbReference>
<dbReference type="EMBL" id="AF324701">
    <property type="protein sequence ID" value="AAG40052.1"/>
    <property type="molecule type" value="mRNA"/>
</dbReference>
<dbReference type="EMBL" id="AF326895">
    <property type="protein sequence ID" value="AAG41477.1"/>
    <property type="molecule type" value="mRNA"/>
</dbReference>
<dbReference type="EMBL" id="AF339713">
    <property type="protein sequence ID" value="AAK00395.1"/>
    <property type="molecule type" value="mRNA"/>
</dbReference>
<dbReference type="EMBL" id="BT000757">
    <property type="protein sequence ID" value="AAN31897.1"/>
    <property type="molecule type" value="mRNA"/>
</dbReference>
<dbReference type="PIR" id="D84599">
    <property type="entry name" value="D84599"/>
</dbReference>
<dbReference type="RefSeq" id="NP_565505.1">
    <property type="nucleotide sequence ID" value="NM_127700.4"/>
</dbReference>
<dbReference type="SMR" id="Q9SJU9"/>
<dbReference type="BioGRID" id="2020">
    <property type="interactions" value="2"/>
</dbReference>
<dbReference type="FunCoup" id="Q9SJU9">
    <property type="interactions" value="1688"/>
</dbReference>
<dbReference type="IntAct" id="Q9SJU9">
    <property type="interactions" value="1"/>
</dbReference>
<dbReference type="STRING" id="3702.Q9SJU9"/>
<dbReference type="iPTMnet" id="Q9SJU9"/>
<dbReference type="PaxDb" id="3702-AT2G21280.1"/>
<dbReference type="ProteomicsDB" id="222228"/>
<dbReference type="EnsemblPlants" id="AT2G21280.1">
    <property type="protein sequence ID" value="AT2G21280.1"/>
    <property type="gene ID" value="AT2G21280"/>
</dbReference>
<dbReference type="GeneID" id="816667"/>
<dbReference type="Gramene" id="AT2G21280.1">
    <property type="protein sequence ID" value="AT2G21280.1"/>
    <property type="gene ID" value="AT2G21280"/>
</dbReference>
<dbReference type="KEGG" id="ath:AT2G21280"/>
<dbReference type="Araport" id="AT2G21280"/>
<dbReference type="TAIR" id="AT2G21280">
    <property type="gene designation" value="SULA"/>
</dbReference>
<dbReference type="eggNOG" id="KOG3019">
    <property type="taxonomic scope" value="Eukaryota"/>
</dbReference>
<dbReference type="HOGENOM" id="CLU_047373_0_3_1"/>
<dbReference type="InParanoid" id="Q9SJU9"/>
<dbReference type="OMA" id="YLPWIHI"/>
<dbReference type="OrthoDB" id="276721at2759"/>
<dbReference type="PhylomeDB" id="Q9SJU9"/>
<dbReference type="PRO" id="PR:Q9SJU9"/>
<dbReference type="Proteomes" id="UP000006548">
    <property type="component" value="Chromosome 2"/>
</dbReference>
<dbReference type="ExpressionAtlas" id="Q9SJU9">
    <property type="expression patterns" value="baseline and differential"/>
</dbReference>
<dbReference type="GO" id="GO:0009507">
    <property type="term" value="C:chloroplast"/>
    <property type="evidence" value="ECO:0007005"/>
    <property type="project" value="TAIR"/>
</dbReference>
<dbReference type="GO" id="GO:0009941">
    <property type="term" value="C:chloroplast envelope"/>
    <property type="evidence" value="ECO:0007005"/>
    <property type="project" value="TAIR"/>
</dbReference>
<dbReference type="GO" id="GO:0009706">
    <property type="term" value="C:chloroplast inner membrane"/>
    <property type="evidence" value="ECO:0007669"/>
    <property type="project" value="UniProtKB-SubCell"/>
</dbReference>
<dbReference type="GO" id="GO:0009536">
    <property type="term" value="C:plastid"/>
    <property type="evidence" value="ECO:0000314"/>
    <property type="project" value="TAIR"/>
</dbReference>
<dbReference type="GO" id="GO:0016491">
    <property type="term" value="F:oxidoreductase activity"/>
    <property type="evidence" value="ECO:0007669"/>
    <property type="project" value="UniProtKB-KW"/>
</dbReference>
<dbReference type="GO" id="GO:0042803">
    <property type="term" value="F:protein homodimerization activity"/>
    <property type="evidence" value="ECO:0000353"/>
    <property type="project" value="UniProtKB"/>
</dbReference>
<dbReference type="GO" id="GO:0010020">
    <property type="term" value="P:chloroplast fission"/>
    <property type="evidence" value="ECO:0000315"/>
    <property type="project" value="TAIR"/>
</dbReference>
<dbReference type="CDD" id="cd05242">
    <property type="entry name" value="SDR_a8"/>
    <property type="match status" value="1"/>
</dbReference>
<dbReference type="FunFam" id="3.40.50.720:FF:000770">
    <property type="entry name" value="NAD(P)-binding Rossmann-fold superfamily protein"/>
    <property type="match status" value="1"/>
</dbReference>
<dbReference type="Gene3D" id="3.40.50.720">
    <property type="entry name" value="NAD(P)-binding Rossmann-like Domain"/>
    <property type="match status" value="1"/>
</dbReference>
<dbReference type="InterPro" id="IPR013549">
    <property type="entry name" value="DUF1731"/>
</dbReference>
<dbReference type="InterPro" id="IPR001509">
    <property type="entry name" value="Epimerase_deHydtase"/>
</dbReference>
<dbReference type="InterPro" id="IPR036291">
    <property type="entry name" value="NAD(P)-bd_dom_sf"/>
</dbReference>
<dbReference type="InterPro" id="IPR010099">
    <property type="entry name" value="SDR39U1"/>
</dbReference>
<dbReference type="NCBIfam" id="TIGR01777">
    <property type="entry name" value="yfcH"/>
    <property type="match status" value="1"/>
</dbReference>
<dbReference type="PANTHER" id="PTHR11092:SF0">
    <property type="entry name" value="EPIMERASE FAMILY PROTEIN SDR39U1"/>
    <property type="match status" value="1"/>
</dbReference>
<dbReference type="PANTHER" id="PTHR11092">
    <property type="entry name" value="SUGAR NUCLEOTIDE EPIMERASE RELATED"/>
    <property type="match status" value="1"/>
</dbReference>
<dbReference type="Pfam" id="PF08338">
    <property type="entry name" value="DUF1731"/>
    <property type="match status" value="1"/>
</dbReference>
<dbReference type="Pfam" id="PF01370">
    <property type="entry name" value="Epimerase"/>
    <property type="match status" value="1"/>
</dbReference>
<dbReference type="SUPFAM" id="SSF51735">
    <property type="entry name" value="NAD(P)-binding Rossmann-fold domains"/>
    <property type="match status" value="1"/>
</dbReference>
<organism>
    <name type="scientific">Arabidopsis thaliana</name>
    <name type="common">Mouse-ear cress</name>
    <dbReference type="NCBI Taxonomy" id="3702"/>
    <lineage>
        <taxon>Eukaryota</taxon>
        <taxon>Viridiplantae</taxon>
        <taxon>Streptophyta</taxon>
        <taxon>Embryophyta</taxon>
        <taxon>Tracheophyta</taxon>
        <taxon>Spermatophyta</taxon>
        <taxon>Magnoliopsida</taxon>
        <taxon>eudicotyledons</taxon>
        <taxon>Gunneridae</taxon>
        <taxon>Pentapetalae</taxon>
        <taxon>rosids</taxon>
        <taxon>malvids</taxon>
        <taxon>Brassicales</taxon>
        <taxon>Brassicaceae</taxon>
        <taxon>Camelineae</taxon>
        <taxon>Arabidopsis</taxon>
    </lineage>
</organism>
<evidence type="ECO:0000250" key="1">
    <source>
        <dbReference type="UniProtKB" id="Q9NRG7"/>
    </source>
</evidence>
<evidence type="ECO:0000255" key="2"/>
<evidence type="ECO:0000269" key="3">
    <source>
    </source>
</evidence>
<evidence type="ECO:0000269" key="4">
    <source>
    </source>
</evidence>
<evidence type="ECO:0000303" key="5">
    <source>
    </source>
</evidence>
<evidence type="ECO:0000303" key="6">
    <source>
    </source>
</evidence>
<evidence type="ECO:0000305" key="7"/>
<evidence type="ECO:0000312" key="8">
    <source>
        <dbReference type="Araport" id="AT2G21280"/>
    </source>
</evidence>
<name>GC1_ARATH</name>